<organism>
    <name type="scientific">Brucella ovis (strain ATCC 25840 / 63/290 / NCTC 10512)</name>
    <dbReference type="NCBI Taxonomy" id="444178"/>
    <lineage>
        <taxon>Bacteria</taxon>
        <taxon>Pseudomonadati</taxon>
        <taxon>Pseudomonadota</taxon>
        <taxon>Alphaproteobacteria</taxon>
        <taxon>Hyphomicrobiales</taxon>
        <taxon>Brucellaceae</taxon>
        <taxon>Brucella/Ochrobactrum group</taxon>
        <taxon>Brucella</taxon>
    </lineage>
</organism>
<proteinExistence type="inferred from homology"/>
<name>ALLA_BRUO2</name>
<gene>
    <name evidence="1" type="primary">allA</name>
    <name type="ordered locus">BOV_0510</name>
</gene>
<keyword id="KW-0456">Lyase</keyword>
<keyword id="KW-0659">Purine metabolism</keyword>
<evidence type="ECO:0000255" key="1">
    <source>
        <dbReference type="HAMAP-Rule" id="MF_00616"/>
    </source>
</evidence>
<feature type="chain" id="PRO_1000061346" description="Ureidoglycolate lyase">
    <location>
        <begin position="1"/>
        <end position="169"/>
    </location>
</feature>
<dbReference type="EC" id="4.3.2.3" evidence="1"/>
<dbReference type="EMBL" id="CP000708">
    <property type="protein sequence ID" value="ABQ60775.1"/>
    <property type="molecule type" value="Genomic_DNA"/>
</dbReference>
<dbReference type="RefSeq" id="WP_004688080.1">
    <property type="nucleotide sequence ID" value="NC_009505.1"/>
</dbReference>
<dbReference type="SMR" id="A5VP72"/>
<dbReference type="KEGG" id="bov:BOV_0510"/>
<dbReference type="HOGENOM" id="CLU_070848_1_0_5"/>
<dbReference type="PhylomeDB" id="A5VP72"/>
<dbReference type="UniPathway" id="UPA00395"/>
<dbReference type="Proteomes" id="UP000006383">
    <property type="component" value="Chromosome I"/>
</dbReference>
<dbReference type="GO" id="GO:0004848">
    <property type="term" value="F:ureidoglycolate hydrolase activity"/>
    <property type="evidence" value="ECO:0007669"/>
    <property type="project" value="InterPro"/>
</dbReference>
<dbReference type="GO" id="GO:0050385">
    <property type="term" value="F:ureidoglycolate lyase activity"/>
    <property type="evidence" value="ECO:0007669"/>
    <property type="project" value="UniProtKB-UniRule"/>
</dbReference>
<dbReference type="GO" id="GO:0000256">
    <property type="term" value="P:allantoin catabolic process"/>
    <property type="evidence" value="ECO:0007669"/>
    <property type="project" value="UniProtKB-UniRule"/>
</dbReference>
<dbReference type="GO" id="GO:0006145">
    <property type="term" value="P:purine nucleobase catabolic process"/>
    <property type="evidence" value="ECO:0007669"/>
    <property type="project" value="UniProtKB-UniRule"/>
</dbReference>
<dbReference type="CDD" id="cd20298">
    <property type="entry name" value="cupin_UAH"/>
    <property type="match status" value="1"/>
</dbReference>
<dbReference type="Gene3D" id="2.60.120.480">
    <property type="entry name" value="Ureidoglycolate hydrolase"/>
    <property type="match status" value="1"/>
</dbReference>
<dbReference type="HAMAP" id="MF_00616">
    <property type="entry name" value="Ureidogly_lyase"/>
    <property type="match status" value="1"/>
</dbReference>
<dbReference type="InterPro" id="IPR011051">
    <property type="entry name" value="RmlC_Cupin_sf"/>
</dbReference>
<dbReference type="InterPro" id="IPR047233">
    <property type="entry name" value="UAH_cupin"/>
</dbReference>
<dbReference type="InterPro" id="IPR007247">
    <property type="entry name" value="Ureidogly_lyase"/>
</dbReference>
<dbReference type="InterPro" id="IPR023525">
    <property type="entry name" value="Ureidogly_lyase_bac"/>
</dbReference>
<dbReference type="InterPro" id="IPR024060">
    <property type="entry name" value="Ureidoglycolate_lyase_dom_sf"/>
</dbReference>
<dbReference type="NCBIfam" id="NF002953">
    <property type="entry name" value="PRK03606.2-4"/>
    <property type="match status" value="1"/>
</dbReference>
<dbReference type="NCBIfam" id="NF009932">
    <property type="entry name" value="PRK13395.1"/>
    <property type="match status" value="1"/>
</dbReference>
<dbReference type="PANTHER" id="PTHR21221">
    <property type="entry name" value="UREIDOGLYCOLATE HYDROLASE"/>
    <property type="match status" value="1"/>
</dbReference>
<dbReference type="PANTHER" id="PTHR21221:SF1">
    <property type="entry name" value="UREIDOGLYCOLATE LYASE"/>
    <property type="match status" value="1"/>
</dbReference>
<dbReference type="Pfam" id="PF04115">
    <property type="entry name" value="Ureidogly_lyase"/>
    <property type="match status" value="1"/>
</dbReference>
<dbReference type="PIRSF" id="PIRSF017306">
    <property type="entry name" value="Ureidogly_hydro"/>
    <property type="match status" value="1"/>
</dbReference>
<dbReference type="SUPFAM" id="SSF51182">
    <property type="entry name" value="RmlC-like cupins"/>
    <property type="match status" value="1"/>
</dbReference>
<comment type="function">
    <text evidence="1">Catalyzes the catabolism of the allantoin degradation intermediate (S)-ureidoglycolate, generating urea and glyoxylate. Involved in the utilization of allantoin as nitrogen source.</text>
</comment>
<comment type="catalytic activity">
    <reaction evidence="1">
        <text>(S)-ureidoglycolate = urea + glyoxylate</text>
        <dbReference type="Rhea" id="RHEA:11304"/>
        <dbReference type="ChEBI" id="CHEBI:16199"/>
        <dbReference type="ChEBI" id="CHEBI:36655"/>
        <dbReference type="ChEBI" id="CHEBI:57296"/>
        <dbReference type="EC" id="4.3.2.3"/>
    </reaction>
</comment>
<comment type="cofactor">
    <cofactor evidence="1">
        <name>Ni(2+)</name>
        <dbReference type="ChEBI" id="CHEBI:49786"/>
    </cofactor>
</comment>
<comment type="pathway">
    <text evidence="1">Nitrogen metabolism; (S)-allantoin degradation.</text>
</comment>
<comment type="subunit">
    <text evidence="1">Homodimer.</text>
</comment>
<comment type="similarity">
    <text evidence="1">Belongs to the ureidoglycolate lyase family.</text>
</comment>
<reference key="1">
    <citation type="journal article" date="2009" name="PLoS ONE">
        <title>Genome degradation in Brucella ovis corresponds with narrowing of its host range and tissue tropism.</title>
        <authorList>
            <person name="Tsolis R.M."/>
            <person name="Seshadri R."/>
            <person name="Santos R.L."/>
            <person name="Sangari F.J."/>
            <person name="Lobo J.M."/>
            <person name="de Jong M.F."/>
            <person name="Ren Q."/>
            <person name="Myers G."/>
            <person name="Brinkac L.M."/>
            <person name="Nelson W.C."/>
            <person name="Deboy R.T."/>
            <person name="Angiuoli S."/>
            <person name="Khouri H."/>
            <person name="Dimitrov G."/>
            <person name="Robinson J.R."/>
            <person name="Mulligan S."/>
            <person name="Walker R.L."/>
            <person name="Elzer P.E."/>
            <person name="Hassan K.A."/>
            <person name="Paulsen I.T."/>
        </authorList>
    </citation>
    <scope>NUCLEOTIDE SEQUENCE [LARGE SCALE GENOMIC DNA]</scope>
    <source>
        <strain>ATCC 25840 / 63/290 / NCTC 10512</strain>
    </source>
</reference>
<accession>A5VP72</accession>
<protein>
    <recommendedName>
        <fullName evidence="1">Ureidoglycolate lyase</fullName>
        <ecNumber evidence="1">4.3.2.3</ecNumber>
    </recommendedName>
    <alternativeName>
        <fullName evidence="1">Ureidoglycolatase</fullName>
    </alternativeName>
</protein>
<sequence length="169" mass="19011">MQIETLTVEPLTKEAFAPFGDVIEVEGAQLRLINNGTTERYHDLARVEAAGTQTRVLINIFRGQSFAAPIDIMMMERHPFGSQAFIPLNGRPFLVVVAEDAGAGPARPRAFLARGDQGVNYLRNIWHHPLLALEQKSDFLVVDRAGREDNLEEYFFSDYAYRIETTQTA</sequence>